<accession>P16803</accession>
<reference key="1">
    <citation type="journal article" date="1990" name="Curr. Top. Microbiol. Immunol.">
        <title>Analysis of the protein-coding content of the sequence of human cytomegalovirus strain AD169.</title>
        <authorList>
            <person name="Chee M.S."/>
            <person name="Bankier A.T."/>
            <person name="Beck S."/>
            <person name="Bohni R."/>
            <person name="Brown C.M."/>
            <person name="Cerny R."/>
            <person name="Horsnell T."/>
            <person name="Hutchison C.A. III"/>
            <person name="Kouzarides T."/>
            <person name="Martignetti J.A."/>
            <person name="Preddie E."/>
            <person name="Satchwell S.C."/>
            <person name="Tomlinson P."/>
            <person name="Weston K.M."/>
            <person name="Barrell B.G."/>
        </authorList>
    </citation>
    <scope>NUCLEOTIDE SEQUENCE [LARGE SCALE GENOMIC DNA]</scope>
</reference>
<organismHost>
    <name type="scientific">Homo sapiens</name>
    <name type="common">Human</name>
    <dbReference type="NCBI Taxonomy" id="9606"/>
</organismHost>
<feature type="chain" id="PRO_0000115253" description="Uncharacterized protein IRL5">
    <location>
        <begin position="1"/>
        <end position="114"/>
    </location>
</feature>
<feature type="region of interest" description="Disordered" evidence="1">
    <location>
        <begin position="18"/>
        <end position="47"/>
    </location>
</feature>
<feature type="region of interest" description="Disordered" evidence="1">
    <location>
        <begin position="65"/>
        <end position="108"/>
    </location>
</feature>
<feature type="compositionally biased region" description="Basic residues" evidence="1">
    <location>
        <begin position="18"/>
        <end position="29"/>
    </location>
</feature>
<feature type="compositionally biased region" description="Basic and acidic residues" evidence="1">
    <location>
        <begin position="30"/>
        <end position="41"/>
    </location>
</feature>
<sequence length="114" mass="12835">MHTYTRACCMGGWYGRETRKRNSHKKVTKRAVEKRKQDSTRQKRRTGAWRPFHDCCCHLGSSVFSRPRAAKSPPFSPSVRAPTDQPADSPAGASGERRGSSDLGKLLNPCVFIW</sequence>
<organism>
    <name type="scientific">Human cytomegalovirus (strain AD169)</name>
    <name type="common">HHV-5</name>
    <name type="synonym">Human herpesvirus 5</name>
    <dbReference type="NCBI Taxonomy" id="10360"/>
    <lineage>
        <taxon>Viruses</taxon>
        <taxon>Duplodnaviria</taxon>
        <taxon>Heunggongvirae</taxon>
        <taxon>Peploviricota</taxon>
        <taxon>Herviviricetes</taxon>
        <taxon>Herpesvirales</taxon>
        <taxon>Orthoherpesviridae</taxon>
        <taxon>Betaherpesvirinae</taxon>
        <taxon>Cytomegalovirus</taxon>
        <taxon>Cytomegalovirus humanbeta5</taxon>
        <taxon>Human cytomegalovirus</taxon>
    </lineage>
</organism>
<evidence type="ECO:0000256" key="1">
    <source>
        <dbReference type="SAM" id="MobiDB-lite"/>
    </source>
</evidence>
<dbReference type="EMBL" id="X17403">
    <property type="protein sequence ID" value="CAA35452.1"/>
    <property type="molecule type" value="Genomic_DNA"/>
</dbReference>
<dbReference type="EMBL" id="X17403">
    <property type="protein sequence ID" value="CAA35306.1"/>
    <property type="molecule type" value="Genomic_DNA"/>
</dbReference>
<dbReference type="PIR" id="S09753">
    <property type="entry name" value="S09753"/>
</dbReference>
<dbReference type="SMR" id="P16803"/>
<dbReference type="Proteomes" id="UP000008991">
    <property type="component" value="Segment"/>
</dbReference>
<name>IR05_HCMVA</name>
<protein>
    <recommendedName>
        <fullName>Uncharacterized protein IRL5</fullName>
        <shortName>TRL5</shortName>
    </recommendedName>
</protein>
<proteinExistence type="predicted"/>